<gene>
    <name type="ORF">POPTRDRAFT_832064</name>
</gene>
<dbReference type="EC" id="5.3.1.23" evidence="1"/>
<dbReference type="EMBL" id="CM009295">
    <property type="protein sequence ID" value="EEE92044.2"/>
    <property type="molecule type" value="Genomic_DNA"/>
</dbReference>
<dbReference type="RefSeq" id="XP_002308521.2">
    <property type="nucleotide sequence ID" value="XM_002308485.2"/>
</dbReference>
<dbReference type="SMR" id="B9HCR2"/>
<dbReference type="FunCoup" id="B9HCR2">
    <property type="interactions" value="4511"/>
</dbReference>
<dbReference type="STRING" id="3694.B9HCR2"/>
<dbReference type="EnsemblPlants" id="Potri.006G219900.2.v4.1">
    <property type="protein sequence ID" value="Potri.006G219900.2.v4.1"/>
    <property type="gene ID" value="Potri.006G219900.v4.1"/>
</dbReference>
<dbReference type="EnsemblPlants" id="Potri.006G219900.5.v4.1">
    <property type="protein sequence ID" value="Potri.006G219900.5.v4.1"/>
    <property type="gene ID" value="Potri.006G219900.v4.1"/>
</dbReference>
<dbReference type="Gramene" id="Potri.006G219900.2.v4.1">
    <property type="protein sequence ID" value="Potri.006G219900.2.v4.1"/>
    <property type="gene ID" value="Potri.006G219900.v4.1"/>
</dbReference>
<dbReference type="Gramene" id="Potri.006G219900.5.v4.1">
    <property type="protein sequence ID" value="Potri.006G219900.5.v4.1"/>
    <property type="gene ID" value="Potri.006G219900.v4.1"/>
</dbReference>
<dbReference type="eggNOG" id="KOG1468">
    <property type="taxonomic scope" value="Eukaryota"/>
</dbReference>
<dbReference type="HOGENOM" id="CLU_016218_1_3_1"/>
<dbReference type="InParanoid" id="B9HCR2"/>
<dbReference type="OMA" id="CETRPLN"/>
<dbReference type="UniPathway" id="UPA00904">
    <property type="reaction ID" value="UER00874"/>
</dbReference>
<dbReference type="Proteomes" id="UP000006729">
    <property type="component" value="Chromosome 6"/>
</dbReference>
<dbReference type="ExpressionAtlas" id="B9HCR2">
    <property type="expression patterns" value="baseline and differential"/>
</dbReference>
<dbReference type="GO" id="GO:0005737">
    <property type="term" value="C:cytoplasm"/>
    <property type="evidence" value="ECO:0007669"/>
    <property type="project" value="UniProtKB-SubCell"/>
</dbReference>
<dbReference type="GO" id="GO:0005634">
    <property type="term" value="C:nucleus"/>
    <property type="evidence" value="ECO:0007669"/>
    <property type="project" value="UniProtKB-SubCell"/>
</dbReference>
<dbReference type="GO" id="GO:0046523">
    <property type="term" value="F:S-methyl-5-thioribose-1-phosphate isomerase activity"/>
    <property type="evidence" value="ECO:0000318"/>
    <property type="project" value="GO_Central"/>
</dbReference>
<dbReference type="GO" id="GO:0019509">
    <property type="term" value="P:L-methionine salvage from methylthioadenosine"/>
    <property type="evidence" value="ECO:0000318"/>
    <property type="project" value="GO_Central"/>
</dbReference>
<dbReference type="FunFam" id="1.20.120.420:FF:000002">
    <property type="entry name" value="Methylthioribose-1-phosphate isomerase"/>
    <property type="match status" value="1"/>
</dbReference>
<dbReference type="FunFam" id="3.40.50.10470:FF:000003">
    <property type="entry name" value="Methylthioribose-1-phosphate isomerase"/>
    <property type="match status" value="1"/>
</dbReference>
<dbReference type="Gene3D" id="1.20.120.420">
    <property type="entry name" value="translation initiation factor eif-2b, domain 1"/>
    <property type="match status" value="1"/>
</dbReference>
<dbReference type="Gene3D" id="3.40.50.10470">
    <property type="entry name" value="Translation initiation factor eif-2b, domain 2"/>
    <property type="match status" value="1"/>
</dbReference>
<dbReference type="HAMAP" id="MF_01678">
    <property type="entry name" value="Salvage_MtnA"/>
    <property type="match status" value="1"/>
</dbReference>
<dbReference type="InterPro" id="IPR000649">
    <property type="entry name" value="IF-2B-related"/>
</dbReference>
<dbReference type="InterPro" id="IPR005251">
    <property type="entry name" value="IF-M1Pi"/>
</dbReference>
<dbReference type="InterPro" id="IPR042529">
    <property type="entry name" value="IF_2B-like_C"/>
</dbReference>
<dbReference type="InterPro" id="IPR011559">
    <property type="entry name" value="Initiation_fac_2B_a/b/d"/>
</dbReference>
<dbReference type="InterPro" id="IPR027363">
    <property type="entry name" value="M1Pi_N"/>
</dbReference>
<dbReference type="InterPro" id="IPR037171">
    <property type="entry name" value="NagB/RpiA_transferase-like"/>
</dbReference>
<dbReference type="NCBIfam" id="TIGR00524">
    <property type="entry name" value="eIF-2B_rel"/>
    <property type="match status" value="1"/>
</dbReference>
<dbReference type="NCBIfam" id="NF004326">
    <property type="entry name" value="PRK05720.1"/>
    <property type="match status" value="1"/>
</dbReference>
<dbReference type="NCBIfam" id="TIGR00512">
    <property type="entry name" value="salvage_mtnA"/>
    <property type="match status" value="1"/>
</dbReference>
<dbReference type="PANTHER" id="PTHR43475">
    <property type="entry name" value="METHYLTHIORIBOSE-1-PHOSPHATE ISOMERASE"/>
    <property type="match status" value="1"/>
</dbReference>
<dbReference type="PANTHER" id="PTHR43475:SF1">
    <property type="entry name" value="METHYLTHIORIBOSE-1-PHOSPHATE ISOMERASE"/>
    <property type="match status" value="1"/>
</dbReference>
<dbReference type="Pfam" id="PF01008">
    <property type="entry name" value="IF-2B"/>
    <property type="match status" value="1"/>
</dbReference>
<dbReference type="SUPFAM" id="SSF100950">
    <property type="entry name" value="NagB/RpiA/CoA transferase-like"/>
    <property type="match status" value="1"/>
</dbReference>
<accession>B9HCR2</accession>
<sequence length="375" mass="39471">MATNPSNGLEGDNTLQSICYHRGSLKLLDQRKLPLETTYLDIKDASDGWLAIREMVVRGAPAIAISAALSLAVEVSNLENFNGTPVEAASFLAGKLDYLVSSRPTAVNLSDAATKLKEVVSKAAAAASNCQSVFQAYIEAAEIMLADDVASNKAIGSYGARFIQNQQKDPTKLSVLTHCNTGSLATAGYGTALGVIRALHGEGVLQRAYCTETRPFNQGSRLTAFELVHEKIPATLIADSAAAALMKDSKVSAVVVGADRVAANGDTANKIGTYSLALCAMHHNIPFYVAAPLTSFDSSLSSGKEIIIEERSPKEMLNARGGLGEQVAASGISVWNPAFDVTPASLISGIITEKGVITKTGMDDFDIKDFINKAG</sequence>
<comment type="function">
    <text evidence="1">Catalyzes the interconversion of methylthioribose-1-phosphate (MTR-1-P) into methylthioribulose-1-phosphate (MTRu-1-P).</text>
</comment>
<comment type="catalytic activity">
    <reaction evidence="1">
        <text>5-(methylsulfanyl)-alpha-D-ribose 1-phosphate = 5-(methylsulfanyl)-D-ribulose 1-phosphate</text>
        <dbReference type="Rhea" id="RHEA:19989"/>
        <dbReference type="ChEBI" id="CHEBI:58533"/>
        <dbReference type="ChEBI" id="CHEBI:58548"/>
        <dbReference type="EC" id="5.3.1.23"/>
    </reaction>
</comment>
<comment type="pathway">
    <text evidence="1">Amino-acid biosynthesis; L-methionine biosynthesis via salvage pathway; L-methionine from S-methyl-5-thio-alpha-D-ribose 1-phosphate: step 1/6.</text>
</comment>
<comment type="subcellular location">
    <subcellularLocation>
        <location evidence="1">Cytoplasm</location>
    </subcellularLocation>
    <subcellularLocation>
        <location evidence="1">Nucleus</location>
    </subcellularLocation>
</comment>
<comment type="similarity">
    <text evidence="1">Belongs to the eIF-2B alpha/beta/delta subunits family. MtnA subfamily.</text>
</comment>
<protein>
    <recommendedName>
        <fullName evidence="1">Methylthioribose-1-phosphate isomerase</fullName>
        <shortName evidence="1">M1Pi</shortName>
        <shortName evidence="1">MTR-1-P isomerase</shortName>
        <ecNumber evidence="1">5.3.1.23</ecNumber>
    </recommendedName>
    <alternativeName>
        <fullName evidence="1">S-methyl-5-thioribose-1-phosphate isomerase</fullName>
    </alternativeName>
    <alternativeName>
        <fullName evidence="1">Translation initiation factor eIF-2B subunit alpha/beta/delta-like protein</fullName>
    </alternativeName>
</protein>
<organism>
    <name type="scientific">Populus trichocarpa</name>
    <name type="common">Western balsam poplar</name>
    <name type="synonym">Populus balsamifera subsp. trichocarpa</name>
    <dbReference type="NCBI Taxonomy" id="3694"/>
    <lineage>
        <taxon>Eukaryota</taxon>
        <taxon>Viridiplantae</taxon>
        <taxon>Streptophyta</taxon>
        <taxon>Embryophyta</taxon>
        <taxon>Tracheophyta</taxon>
        <taxon>Spermatophyta</taxon>
        <taxon>Magnoliopsida</taxon>
        <taxon>eudicotyledons</taxon>
        <taxon>Gunneridae</taxon>
        <taxon>Pentapetalae</taxon>
        <taxon>rosids</taxon>
        <taxon>fabids</taxon>
        <taxon>Malpighiales</taxon>
        <taxon>Salicaceae</taxon>
        <taxon>Saliceae</taxon>
        <taxon>Populus</taxon>
    </lineage>
</organism>
<proteinExistence type="inferred from homology"/>
<keyword id="KW-0028">Amino-acid biosynthesis</keyword>
<keyword id="KW-0963">Cytoplasm</keyword>
<keyword id="KW-0413">Isomerase</keyword>
<keyword id="KW-0486">Methionine biosynthesis</keyword>
<keyword id="KW-0539">Nucleus</keyword>
<keyword id="KW-1185">Reference proteome</keyword>
<name>MTNA_POPTR</name>
<reference key="1">
    <citation type="journal article" date="2006" name="Science">
        <title>The genome of black cottonwood, Populus trichocarpa (Torr. &amp; Gray).</title>
        <authorList>
            <person name="Tuskan G.A."/>
            <person name="Difazio S."/>
            <person name="Jansson S."/>
            <person name="Bohlmann J."/>
            <person name="Grigoriev I."/>
            <person name="Hellsten U."/>
            <person name="Putnam N."/>
            <person name="Ralph S."/>
            <person name="Rombauts S."/>
            <person name="Salamov A."/>
            <person name="Schein J."/>
            <person name="Sterck L."/>
            <person name="Aerts A."/>
            <person name="Bhalerao R.R."/>
            <person name="Bhalerao R.P."/>
            <person name="Blaudez D."/>
            <person name="Boerjan W."/>
            <person name="Brun A."/>
            <person name="Brunner A."/>
            <person name="Busov V."/>
            <person name="Campbell M."/>
            <person name="Carlson J."/>
            <person name="Chalot M."/>
            <person name="Chapman J."/>
            <person name="Chen G.-L."/>
            <person name="Cooper D."/>
            <person name="Coutinho P.M."/>
            <person name="Couturier J."/>
            <person name="Covert S."/>
            <person name="Cronk Q."/>
            <person name="Cunningham R."/>
            <person name="Davis J."/>
            <person name="Degroeve S."/>
            <person name="Dejardin A."/>
            <person name="dePamphilis C.W."/>
            <person name="Detter J."/>
            <person name="Dirks B."/>
            <person name="Dubchak I."/>
            <person name="Duplessis S."/>
            <person name="Ehlting J."/>
            <person name="Ellis B."/>
            <person name="Gendler K."/>
            <person name="Goodstein D."/>
            <person name="Gribskov M."/>
            <person name="Grimwood J."/>
            <person name="Groover A."/>
            <person name="Gunter L."/>
            <person name="Hamberger B."/>
            <person name="Heinze B."/>
            <person name="Helariutta Y."/>
            <person name="Henrissat B."/>
            <person name="Holligan D."/>
            <person name="Holt R."/>
            <person name="Huang W."/>
            <person name="Islam-Faridi N."/>
            <person name="Jones S."/>
            <person name="Jones-Rhoades M."/>
            <person name="Jorgensen R."/>
            <person name="Joshi C."/>
            <person name="Kangasjaervi J."/>
            <person name="Karlsson J."/>
            <person name="Kelleher C."/>
            <person name="Kirkpatrick R."/>
            <person name="Kirst M."/>
            <person name="Kohler A."/>
            <person name="Kalluri U."/>
            <person name="Larimer F."/>
            <person name="Leebens-Mack J."/>
            <person name="Leple J.-C."/>
            <person name="Locascio P."/>
            <person name="Lou Y."/>
            <person name="Lucas S."/>
            <person name="Martin F."/>
            <person name="Montanini B."/>
            <person name="Napoli C."/>
            <person name="Nelson D.R."/>
            <person name="Nelson C."/>
            <person name="Nieminen K."/>
            <person name="Nilsson O."/>
            <person name="Pereda V."/>
            <person name="Peter G."/>
            <person name="Philippe R."/>
            <person name="Pilate G."/>
            <person name="Poliakov A."/>
            <person name="Razumovskaya J."/>
            <person name="Richardson P."/>
            <person name="Rinaldi C."/>
            <person name="Ritland K."/>
            <person name="Rouze P."/>
            <person name="Ryaboy D."/>
            <person name="Schmutz J."/>
            <person name="Schrader J."/>
            <person name="Segerman B."/>
            <person name="Shin H."/>
            <person name="Siddiqui A."/>
            <person name="Sterky F."/>
            <person name="Terry A."/>
            <person name="Tsai C.-J."/>
            <person name="Uberbacher E."/>
            <person name="Unneberg P."/>
            <person name="Vahala J."/>
            <person name="Wall K."/>
            <person name="Wessler S."/>
            <person name="Yang G."/>
            <person name="Yin T."/>
            <person name="Douglas C."/>
            <person name="Marra M."/>
            <person name="Sandberg G."/>
            <person name="Van de Peer Y."/>
            <person name="Rokhsar D.S."/>
        </authorList>
    </citation>
    <scope>NUCLEOTIDE SEQUENCE [LARGE SCALE GENOMIC DNA]</scope>
    <source>
        <strain>cv. Nisqually</strain>
    </source>
</reference>
<reference key="2">
    <citation type="submission" date="2008-12" db="EMBL/GenBank/DDBJ databases">
        <authorList>
            <consortium name="US DOE Joint Genome Institute (JGI-PGF)"/>
            <person name="Grigoriev I.V."/>
            <person name="Terry A."/>
            <person name="Salamov A.A."/>
            <person name="Otillar R."/>
            <person name="Lou Y."/>
            <person name="Lucas S."/>
            <person name="Hammon N."/>
            <person name="Glavina del Rio T."/>
            <person name="Detter J."/>
            <person name="Kalin E."/>
            <person name="Tice H."/>
            <person name="Pitluck S."/>
            <person name="Chapman J."/>
            <person name="Putnam N.H."/>
            <person name="Brunner A."/>
            <person name="Busov V."/>
            <person name="Campbell M."/>
            <person name="Chalot M."/>
            <person name="Covert S."/>
            <person name="Davis J."/>
            <person name="DiFazio S."/>
            <person name="Gribskov M."/>
            <person name="Gunter L."/>
            <person name="Hamberger B."/>
            <person name="Jansson S."/>
            <person name="Joshi C."/>
            <person name="Larimer F."/>
            <person name="Martin F."/>
            <person name="Napoli C."/>
            <person name="Nelson D."/>
            <person name="Ralph S."/>
            <person name="Rombauts S."/>
            <person name="Rouze P."/>
            <person name="Schrader J."/>
            <person name="Tsai C."/>
            <person name="Vahala J."/>
            <person name="Tuskan G."/>
            <person name="Rokhsar D."/>
        </authorList>
    </citation>
    <scope>GENOME REANNOTATION</scope>
    <source>
        <strain>cv. Nisqually</strain>
    </source>
</reference>
<feature type="chain" id="PRO_0000401995" description="Methylthioribose-1-phosphate isomerase">
    <location>
        <begin position="1"/>
        <end position="375"/>
    </location>
</feature>
<feature type="active site" description="Proton donor" evidence="1">
    <location>
        <position position="259"/>
    </location>
</feature>
<feature type="site" description="Transition state stabilizer" evidence="1">
    <location>
        <position position="179"/>
    </location>
</feature>
<evidence type="ECO:0000255" key="1">
    <source>
        <dbReference type="HAMAP-Rule" id="MF_03119"/>
    </source>
</evidence>